<keyword id="KW-0929">Antimicrobial</keyword>
<keyword id="KW-1015">Disulfide bond</keyword>
<keyword id="KW-0295">Fungicide</keyword>
<keyword id="KW-0611">Plant defense</keyword>
<keyword id="KW-1185">Reference proteome</keyword>
<keyword id="KW-0964">Secreted</keyword>
<keyword id="KW-0732">Signal</keyword>
<sequence>MTFFLVIILAISSSNYNVLAVSGPPKCIALCRPGYYERFECFHDCITEGYDDGSCVPGPTTAKCGIITKTTNKICYSFAFE</sequence>
<reference key="1">
    <citation type="journal article" date="1999" name="Nature">
        <title>Sequence and analysis of chromosome 2 of the plant Arabidopsis thaliana.</title>
        <authorList>
            <person name="Lin X."/>
            <person name="Kaul S."/>
            <person name="Rounsley S.D."/>
            <person name="Shea T.P."/>
            <person name="Benito M.-I."/>
            <person name="Town C.D."/>
            <person name="Fujii C.Y."/>
            <person name="Mason T.M."/>
            <person name="Bowman C.L."/>
            <person name="Barnstead M.E."/>
            <person name="Feldblyum T.V."/>
            <person name="Buell C.R."/>
            <person name="Ketchum K.A."/>
            <person name="Lee J.J."/>
            <person name="Ronning C.M."/>
            <person name="Koo H.L."/>
            <person name="Moffat K.S."/>
            <person name="Cronin L.A."/>
            <person name="Shen M."/>
            <person name="Pai G."/>
            <person name="Van Aken S."/>
            <person name="Umayam L."/>
            <person name="Tallon L.J."/>
            <person name="Gill J.E."/>
            <person name="Adams M.D."/>
            <person name="Carrera A.J."/>
            <person name="Creasy T.H."/>
            <person name="Goodman H.M."/>
            <person name="Somerville C.R."/>
            <person name="Copenhaver G.P."/>
            <person name="Preuss D."/>
            <person name="Nierman W.C."/>
            <person name="White O."/>
            <person name="Eisen J.A."/>
            <person name="Salzberg S.L."/>
            <person name="Fraser C.M."/>
            <person name="Venter J.C."/>
        </authorList>
    </citation>
    <scope>NUCLEOTIDE SEQUENCE [LARGE SCALE GENOMIC DNA]</scope>
    <source>
        <strain>cv. Columbia</strain>
    </source>
</reference>
<reference key="2">
    <citation type="journal article" date="2017" name="Plant J.">
        <title>Araport11: a complete reannotation of the Arabidopsis thaliana reference genome.</title>
        <authorList>
            <person name="Cheng C.Y."/>
            <person name="Krishnakumar V."/>
            <person name="Chan A.P."/>
            <person name="Thibaud-Nissen F."/>
            <person name="Schobel S."/>
            <person name="Town C.D."/>
        </authorList>
    </citation>
    <scope>GENOME REANNOTATION</scope>
    <source>
        <strain>cv. Columbia</strain>
    </source>
</reference>
<reference key="3">
    <citation type="journal article" date="2005" name="Plant Physiol.">
        <title>Genome organization of more than 300 defensin-like genes in Arabidopsis.</title>
        <authorList>
            <person name="Silverstein K.A.T."/>
            <person name="Graham M.A."/>
            <person name="Paape T.D."/>
            <person name="VandenBosch K.A."/>
        </authorList>
    </citation>
    <scope>GENE FAMILY</scope>
</reference>
<organism>
    <name type="scientific">Arabidopsis thaliana</name>
    <name type="common">Mouse-ear cress</name>
    <dbReference type="NCBI Taxonomy" id="3702"/>
    <lineage>
        <taxon>Eukaryota</taxon>
        <taxon>Viridiplantae</taxon>
        <taxon>Streptophyta</taxon>
        <taxon>Embryophyta</taxon>
        <taxon>Tracheophyta</taxon>
        <taxon>Spermatophyta</taxon>
        <taxon>Magnoliopsida</taxon>
        <taxon>eudicotyledons</taxon>
        <taxon>Gunneridae</taxon>
        <taxon>Pentapetalae</taxon>
        <taxon>rosids</taxon>
        <taxon>malvids</taxon>
        <taxon>Brassicales</taxon>
        <taxon>Brassicaceae</taxon>
        <taxon>Camelineae</taxon>
        <taxon>Arabidopsis</taxon>
    </lineage>
</organism>
<proteinExistence type="uncertain"/>
<dbReference type="EMBL" id="AC002341">
    <property type="status" value="NOT_ANNOTATED_CDS"/>
    <property type="molecule type" value="Genomic_DNA"/>
</dbReference>
<dbReference type="EMBL" id="CP002685">
    <property type="protein sequence ID" value="AEC08922.1"/>
    <property type="molecule type" value="Genomic_DNA"/>
</dbReference>
<dbReference type="RefSeq" id="NP_001031473.1">
    <property type="nucleotide sequence ID" value="NM_001036396.1"/>
</dbReference>
<dbReference type="GlyGen" id="Q2V433">
    <property type="glycosylation" value="1 site"/>
</dbReference>
<dbReference type="PaxDb" id="3702-AT2G34123.1"/>
<dbReference type="EnsemblPlants" id="AT2G34123.1">
    <property type="protein sequence ID" value="AT2G34123.1"/>
    <property type="gene ID" value="AT2G34123"/>
</dbReference>
<dbReference type="GeneID" id="3768647"/>
<dbReference type="Gramene" id="AT2G34123.1">
    <property type="protein sequence ID" value="AT2G34123.1"/>
    <property type="gene ID" value="AT2G34123"/>
</dbReference>
<dbReference type="KEGG" id="ath:AT2G34123"/>
<dbReference type="Araport" id="AT2G34123"/>
<dbReference type="TAIR" id="AT2G34123"/>
<dbReference type="HOGENOM" id="CLU_165205_1_0_1"/>
<dbReference type="InParanoid" id="Q2V433"/>
<dbReference type="OMA" id="YEDHECI"/>
<dbReference type="OrthoDB" id="1030254at2759"/>
<dbReference type="PhylomeDB" id="Q2V433"/>
<dbReference type="Proteomes" id="UP000006548">
    <property type="component" value="Chromosome 2"/>
</dbReference>
<dbReference type="ExpressionAtlas" id="Q2V433">
    <property type="expression patterns" value="baseline and differential"/>
</dbReference>
<dbReference type="GO" id="GO:0005576">
    <property type="term" value="C:extracellular region"/>
    <property type="evidence" value="ECO:0007669"/>
    <property type="project" value="UniProtKB-SubCell"/>
</dbReference>
<dbReference type="GO" id="GO:0050832">
    <property type="term" value="P:defense response to fungus"/>
    <property type="evidence" value="ECO:0007669"/>
    <property type="project" value="UniProtKB-KW"/>
</dbReference>
<dbReference type="GO" id="GO:0031640">
    <property type="term" value="P:killing of cells of another organism"/>
    <property type="evidence" value="ECO:0007669"/>
    <property type="project" value="UniProtKB-KW"/>
</dbReference>
<dbReference type="InterPro" id="IPR056373">
    <property type="entry name" value="Defensin-like_dom"/>
</dbReference>
<dbReference type="Pfam" id="PF24552">
    <property type="entry name" value="Defensin"/>
    <property type="match status" value="1"/>
</dbReference>
<name>DEF52_ARATH</name>
<evidence type="ECO:0000250" key="1"/>
<evidence type="ECO:0000255" key="2"/>
<evidence type="ECO:0000305" key="3"/>
<comment type="subcellular location">
    <subcellularLocation>
        <location evidence="1">Secreted</location>
    </subcellularLocation>
</comment>
<comment type="similarity">
    <text evidence="3">Belongs to the DEFL family.</text>
</comment>
<comment type="caution">
    <text evidence="3">Could be the product of a pseudogene. Lacks 2 of the 4 disulfide bonds, which are conserved features of the family.</text>
</comment>
<feature type="signal peptide" evidence="2">
    <location>
        <begin position="1"/>
        <end position="20"/>
    </location>
</feature>
<feature type="chain" id="PRO_0000379632" description="Putative defensin-like protein 52">
    <location>
        <begin position="21"/>
        <end position="81"/>
    </location>
</feature>
<feature type="disulfide bond" evidence="1">
    <location>
        <begin position="31"/>
        <end position="55"/>
    </location>
</feature>
<feature type="disulfide bond" evidence="1">
    <location>
        <begin position="41"/>
        <end position="64"/>
    </location>
</feature>
<gene>
    <name type="ordered locus">At2g34123</name>
    <name type="ORF">T14G11</name>
</gene>
<protein>
    <recommendedName>
        <fullName>Putative defensin-like protein 52</fullName>
    </recommendedName>
</protein>
<accession>Q2V433</accession>